<name>EFG_BACFR</name>
<protein>
    <recommendedName>
        <fullName evidence="1">Elongation factor G</fullName>
        <shortName evidence="1">EF-G</shortName>
    </recommendedName>
</protein>
<reference key="1">
    <citation type="journal article" date="2004" name="Proc. Natl. Acad. Sci. U.S.A.">
        <title>Genomic analysis of Bacteroides fragilis reveals extensive DNA inversions regulating cell surface adaptation.</title>
        <authorList>
            <person name="Kuwahara T."/>
            <person name="Yamashita A."/>
            <person name="Hirakawa H."/>
            <person name="Nakayama H."/>
            <person name="Toh H."/>
            <person name="Okada N."/>
            <person name="Kuhara S."/>
            <person name="Hattori M."/>
            <person name="Hayashi T."/>
            <person name="Ohnishi Y."/>
        </authorList>
    </citation>
    <scope>NUCLEOTIDE SEQUENCE [LARGE SCALE GENOMIC DNA]</scope>
    <source>
        <strain>YCH46</strain>
    </source>
</reference>
<evidence type="ECO:0000255" key="1">
    <source>
        <dbReference type="HAMAP-Rule" id="MF_00054"/>
    </source>
</evidence>
<evidence type="ECO:0000256" key="2">
    <source>
        <dbReference type="SAM" id="MobiDB-lite"/>
    </source>
</evidence>
<dbReference type="EMBL" id="AP006841">
    <property type="protein sequence ID" value="BAD50926.1"/>
    <property type="molecule type" value="Genomic_DNA"/>
</dbReference>
<dbReference type="RefSeq" id="WP_005791539.1">
    <property type="nucleotide sequence ID" value="NZ_UYXF01000007.1"/>
</dbReference>
<dbReference type="RefSeq" id="YP_101460.1">
    <property type="nucleotide sequence ID" value="NC_006347.1"/>
</dbReference>
<dbReference type="SMR" id="Q64NK6"/>
<dbReference type="STRING" id="295405.BF4183"/>
<dbReference type="GeneID" id="60366821"/>
<dbReference type="KEGG" id="bfr:BF4183"/>
<dbReference type="PATRIC" id="fig|295405.11.peg.4037"/>
<dbReference type="HOGENOM" id="CLU_002794_4_1_10"/>
<dbReference type="OrthoDB" id="9801591at2"/>
<dbReference type="Proteomes" id="UP000002197">
    <property type="component" value="Chromosome"/>
</dbReference>
<dbReference type="GO" id="GO:0005737">
    <property type="term" value="C:cytoplasm"/>
    <property type="evidence" value="ECO:0007669"/>
    <property type="project" value="UniProtKB-SubCell"/>
</dbReference>
<dbReference type="GO" id="GO:0005525">
    <property type="term" value="F:GTP binding"/>
    <property type="evidence" value="ECO:0007669"/>
    <property type="project" value="UniProtKB-UniRule"/>
</dbReference>
<dbReference type="GO" id="GO:0003924">
    <property type="term" value="F:GTPase activity"/>
    <property type="evidence" value="ECO:0007669"/>
    <property type="project" value="InterPro"/>
</dbReference>
<dbReference type="GO" id="GO:0003746">
    <property type="term" value="F:translation elongation factor activity"/>
    <property type="evidence" value="ECO:0007669"/>
    <property type="project" value="UniProtKB-UniRule"/>
</dbReference>
<dbReference type="GO" id="GO:0032790">
    <property type="term" value="P:ribosome disassembly"/>
    <property type="evidence" value="ECO:0007669"/>
    <property type="project" value="TreeGrafter"/>
</dbReference>
<dbReference type="CDD" id="cd01886">
    <property type="entry name" value="EF-G"/>
    <property type="match status" value="1"/>
</dbReference>
<dbReference type="CDD" id="cd16262">
    <property type="entry name" value="EFG_III"/>
    <property type="match status" value="1"/>
</dbReference>
<dbReference type="CDD" id="cd01434">
    <property type="entry name" value="EFG_mtEFG1_IV"/>
    <property type="match status" value="1"/>
</dbReference>
<dbReference type="CDD" id="cd03713">
    <property type="entry name" value="EFG_mtEFG_C"/>
    <property type="match status" value="1"/>
</dbReference>
<dbReference type="CDD" id="cd04088">
    <property type="entry name" value="EFG_mtEFG_II"/>
    <property type="match status" value="1"/>
</dbReference>
<dbReference type="FunFam" id="2.40.30.10:FF:000006">
    <property type="entry name" value="Elongation factor G"/>
    <property type="match status" value="1"/>
</dbReference>
<dbReference type="FunFam" id="3.30.230.10:FF:000003">
    <property type="entry name" value="Elongation factor G"/>
    <property type="match status" value="1"/>
</dbReference>
<dbReference type="FunFam" id="3.30.70.240:FF:000001">
    <property type="entry name" value="Elongation factor G"/>
    <property type="match status" value="1"/>
</dbReference>
<dbReference type="FunFam" id="3.30.70.870:FF:000001">
    <property type="entry name" value="Elongation factor G"/>
    <property type="match status" value="1"/>
</dbReference>
<dbReference type="FunFam" id="3.40.50.300:FF:000029">
    <property type="entry name" value="Elongation factor G"/>
    <property type="match status" value="1"/>
</dbReference>
<dbReference type="Gene3D" id="3.30.230.10">
    <property type="match status" value="1"/>
</dbReference>
<dbReference type="Gene3D" id="3.30.70.240">
    <property type="match status" value="1"/>
</dbReference>
<dbReference type="Gene3D" id="3.30.70.870">
    <property type="entry name" value="Elongation Factor G (Translational Gtpase), domain 3"/>
    <property type="match status" value="1"/>
</dbReference>
<dbReference type="Gene3D" id="3.40.50.300">
    <property type="entry name" value="P-loop containing nucleotide triphosphate hydrolases"/>
    <property type="match status" value="1"/>
</dbReference>
<dbReference type="Gene3D" id="2.40.30.10">
    <property type="entry name" value="Translation factors"/>
    <property type="match status" value="1"/>
</dbReference>
<dbReference type="HAMAP" id="MF_00054_B">
    <property type="entry name" value="EF_G_EF_2_B"/>
    <property type="match status" value="1"/>
</dbReference>
<dbReference type="InterPro" id="IPR041095">
    <property type="entry name" value="EFG_II"/>
</dbReference>
<dbReference type="InterPro" id="IPR009022">
    <property type="entry name" value="EFG_III"/>
</dbReference>
<dbReference type="InterPro" id="IPR035647">
    <property type="entry name" value="EFG_III/V"/>
</dbReference>
<dbReference type="InterPro" id="IPR047872">
    <property type="entry name" value="EFG_IV"/>
</dbReference>
<dbReference type="InterPro" id="IPR035649">
    <property type="entry name" value="EFG_V"/>
</dbReference>
<dbReference type="InterPro" id="IPR000640">
    <property type="entry name" value="EFG_V-like"/>
</dbReference>
<dbReference type="InterPro" id="IPR004161">
    <property type="entry name" value="EFTu-like_2"/>
</dbReference>
<dbReference type="InterPro" id="IPR031157">
    <property type="entry name" value="G_TR_CS"/>
</dbReference>
<dbReference type="InterPro" id="IPR027417">
    <property type="entry name" value="P-loop_NTPase"/>
</dbReference>
<dbReference type="InterPro" id="IPR020568">
    <property type="entry name" value="Ribosomal_Su5_D2-typ_SF"/>
</dbReference>
<dbReference type="InterPro" id="IPR014721">
    <property type="entry name" value="Ribsml_uS5_D2-typ_fold_subgr"/>
</dbReference>
<dbReference type="InterPro" id="IPR005225">
    <property type="entry name" value="Small_GTP-bd"/>
</dbReference>
<dbReference type="InterPro" id="IPR000795">
    <property type="entry name" value="T_Tr_GTP-bd_dom"/>
</dbReference>
<dbReference type="InterPro" id="IPR009000">
    <property type="entry name" value="Transl_B-barrel_sf"/>
</dbReference>
<dbReference type="InterPro" id="IPR004540">
    <property type="entry name" value="Transl_elong_EFG/EF2"/>
</dbReference>
<dbReference type="InterPro" id="IPR005517">
    <property type="entry name" value="Transl_elong_EFG/EF2_IV"/>
</dbReference>
<dbReference type="NCBIfam" id="TIGR00484">
    <property type="entry name" value="EF-G"/>
    <property type="match status" value="1"/>
</dbReference>
<dbReference type="NCBIfam" id="NF009381">
    <property type="entry name" value="PRK12740.1-5"/>
    <property type="match status" value="1"/>
</dbReference>
<dbReference type="NCBIfam" id="TIGR00231">
    <property type="entry name" value="small_GTP"/>
    <property type="match status" value="1"/>
</dbReference>
<dbReference type="PANTHER" id="PTHR43261:SF1">
    <property type="entry name" value="RIBOSOME-RELEASING FACTOR 2, MITOCHONDRIAL"/>
    <property type="match status" value="1"/>
</dbReference>
<dbReference type="PANTHER" id="PTHR43261">
    <property type="entry name" value="TRANSLATION ELONGATION FACTOR G-RELATED"/>
    <property type="match status" value="1"/>
</dbReference>
<dbReference type="Pfam" id="PF00679">
    <property type="entry name" value="EFG_C"/>
    <property type="match status" value="1"/>
</dbReference>
<dbReference type="Pfam" id="PF14492">
    <property type="entry name" value="EFG_III"/>
    <property type="match status" value="1"/>
</dbReference>
<dbReference type="Pfam" id="PF03764">
    <property type="entry name" value="EFG_IV"/>
    <property type="match status" value="1"/>
</dbReference>
<dbReference type="Pfam" id="PF00009">
    <property type="entry name" value="GTP_EFTU"/>
    <property type="match status" value="1"/>
</dbReference>
<dbReference type="Pfam" id="PF03144">
    <property type="entry name" value="GTP_EFTU_D2"/>
    <property type="match status" value="1"/>
</dbReference>
<dbReference type="PRINTS" id="PR00315">
    <property type="entry name" value="ELONGATNFCT"/>
</dbReference>
<dbReference type="SMART" id="SM00838">
    <property type="entry name" value="EFG_C"/>
    <property type="match status" value="1"/>
</dbReference>
<dbReference type="SMART" id="SM00889">
    <property type="entry name" value="EFG_IV"/>
    <property type="match status" value="1"/>
</dbReference>
<dbReference type="SUPFAM" id="SSF54980">
    <property type="entry name" value="EF-G C-terminal domain-like"/>
    <property type="match status" value="2"/>
</dbReference>
<dbReference type="SUPFAM" id="SSF52540">
    <property type="entry name" value="P-loop containing nucleoside triphosphate hydrolases"/>
    <property type="match status" value="1"/>
</dbReference>
<dbReference type="SUPFAM" id="SSF54211">
    <property type="entry name" value="Ribosomal protein S5 domain 2-like"/>
    <property type="match status" value="1"/>
</dbReference>
<dbReference type="SUPFAM" id="SSF50447">
    <property type="entry name" value="Translation proteins"/>
    <property type="match status" value="1"/>
</dbReference>
<dbReference type="PROSITE" id="PS00301">
    <property type="entry name" value="G_TR_1"/>
    <property type="match status" value="1"/>
</dbReference>
<dbReference type="PROSITE" id="PS51722">
    <property type="entry name" value="G_TR_2"/>
    <property type="match status" value="1"/>
</dbReference>
<proteinExistence type="inferred from homology"/>
<organism>
    <name type="scientific">Bacteroides fragilis (strain YCH46)</name>
    <dbReference type="NCBI Taxonomy" id="295405"/>
    <lineage>
        <taxon>Bacteria</taxon>
        <taxon>Pseudomonadati</taxon>
        <taxon>Bacteroidota</taxon>
        <taxon>Bacteroidia</taxon>
        <taxon>Bacteroidales</taxon>
        <taxon>Bacteroidaceae</taxon>
        <taxon>Bacteroides</taxon>
    </lineage>
</organism>
<gene>
    <name evidence="1" type="primary">fusA</name>
    <name type="ordered locus">BF4183</name>
</gene>
<keyword id="KW-0963">Cytoplasm</keyword>
<keyword id="KW-0251">Elongation factor</keyword>
<keyword id="KW-0342">GTP-binding</keyword>
<keyword id="KW-0547">Nucleotide-binding</keyword>
<keyword id="KW-0648">Protein biosynthesis</keyword>
<feature type="chain" id="PRO_0000091065" description="Elongation factor G">
    <location>
        <begin position="1"/>
        <end position="705"/>
    </location>
</feature>
<feature type="domain" description="tr-type G">
    <location>
        <begin position="7"/>
        <end position="287"/>
    </location>
</feature>
<feature type="region of interest" description="Disordered" evidence="2">
    <location>
        <begin position="291"/>
        <end position="312"/>
    </location>
</feature>
<feature type="compositionally biased region" description="Basic and acidic residues" evidence="2">
    <location>
        <begin position="302"/>
        <end position="312"/>
    </location>
</feature>
<feature type="binding site" evidence="1">
    <location>
        <begin position="16"/>
        <end position="23"/>
    </location>
    <ligand>
        <name>GTP</name>
        <dbReference type="ChEBI" id="CHEBI:37565"/>
    </ligand>
</feature>
<feature type="binding site" evidence="1">
    <location>
        <begin position="84"/>
        <end position="88"/>
    </location>
    <ligand>
        <name>GTP</name>
        <dbReference type="ChEBI" id="CHEBI:37565"/>
    </ligand>
</feature>
<feature type="binding site" evidence="1">
    <location>
        <begin position="138"/>
        <end position="141"/>
    </location>
    <ligand>
        <name>GTP</name>
        <dbReference type="ChEBI" id="CHEBI:37565"/>
    </ligand>
</feature>
<sequence length="705" mass="77508">MAKNDLHLTRNIGIMAHIDAGKTTTSERILFYTGLTHKIGEVHDGAATMDWMEQEQERGITITSAATTTRWKYAGDTYKINLIDTPGHVDFTAEVERSLRILDGAVAAYCAVGGVEPQSETVWRQADKYNVPRIAYVNKMDRSGADFFEVVRQMKAVLGANPCPVVIPIGAEENFKGLVDLIKMKAIYWHDETMGADYTIEEIPANLVDEANEWRDKMLEKVAEFDDALMEKYFDDPSTITEEEVLRALRNATVQMAVVPMLCGSSFKNKGVQTLLDYVCAFLPSPLDAENVVGTNPDTGAEEDRKPSEDDKTSALAFKIATDPYVGRLTFFRVYSGKIEAGSYIYNSRSGKKERVSRLFQMHSNKQNPVEVIGAGDIGAGVGFKDIHTGDTLCDETAPIVLESMDFPEPVIGIAVEPKTQKDMDKLSNGLAKLAEEDPTFTVKTDEQTGQTVISGMGELHLDIIIDRLKREFKVECNQGKPQVNYKEAITKTVNLREVYKKQSGGRGKFADIIVNIGPVDEDFTQGGLQFVDEVKGGNIPKEFIPSVQKGFQTAMKNGVLAGYPLDSLKVTLVDGSFHPVDSDQLSFEICAIQAYKNACAKAGPVLMEPIMKLEVVTPEENMGDVIGDLNKRRGQVEGMESSRSGARIVKAMVPLAEMFGYVTALRTITSGRATSSMVYSHHAQVSSSIAKAVLEEVKGRADLL</sequence>
<accession>Q64NK6</accession>
<comment type="function">
    <text evidence="1">Catalyzes the GTP-dependent ribosomal translocation step during translation elongation. During this step, the ribosome changes from the pre-translocational (PRE) to the post-translocational (POST) state as the newly formed A-site-bound peptidyl-tRNA and P-site-bound deacylated tRNA move to the P and E sites, respectively. Catalyzes the coordinated movement of the two tRNA molecules, the mRNA and conformational changes in the ribosome.</text>
</comment>
<comment type="subcellular location">
    <subcellularLocation>
        <location evidence="1">Cytoplasm</location>
    </subcellularLocation>
</comment>
<comment type="similarity">
    <text evidence="1">Belongs to the TRAFAC class translation factor GTPase superfamily. Classic translation factor GTPase family. EF-G/EF-2 subfamily.</text>
</comment>